<feature type="chain" id="PRO_1000080738" description="Transcriptional repressor NrdR">
    <location>
        <begin position="1"/>
        <end position="151"/>
    </location>
</feature>
<feature type="domain" description="ATP-cone" evidence="1">
    <location>
        <begin position="49"/>
        <end position="139"/>
    </location>
</feature>
<feature type="zinc finger region" evidence="1">
    <location>
        <begin position="3"/>
        <end position="34"/>
    </location>
</feature>
<reference key="1">
    <citation type="submission" date="2007-02" db="EMBL/GenBank/DDBJ databases">
        <title>Complete sequence of Clostridium thermocellum ATCC 27405.</title>
        <authorList>
            <consortium name="US DOE Joint Genome Institute"/>
            <person name="Copeland A."/>
            <person name="Lucas S."/>
            <person name="Lapidus A."/>
            <person name="Barry K."/>
            <person name="Detter J.C."/>
            <person name="Glavina del Rio T."/>
            <person name="Hammon N."/>
            <person name="Israni S."/>
            <person name="Dalin E."/>
            <person name="Tice H."/>
            <person name="Pitluck S."/>
            <person name="Chertkov O."/>
            <person name="Brettin T."/>
            <person name="Bruce D."/>
            <person name="Han C."/>
            <person name="Tapia R."/>
            <person name="Gilna P."/>
            <person name="Schmutz J."/>
            <person name="Larimer F."/>
            <person name="Land M."/>
            <person name="Hauser L."/>
            <person name="Kyrpides N."/>
            <person name="Mikhailova N."/>
            <person name="Wu J.H.D."/>
            <person name="Newcomb M."/>
            <person name="Richardson P."/>
        </authorList>
    </citation>
    <scope>NUCLEOTIDE SEQUENCE [LARGE SCALE GENOMIC DNA]</scope>
    <source>
        <strain>ATCC 27405 / DSM 1237 / JCM 9322 / NBRC 103400 / NCIMB 10682 / NRRL B-4536 / VPI 7372</strain>
    </source>
</reference>
<dbReference type="EMBL" id="CP000568">
    <property type="protein sequence ID" value="ABN51688.1"/>
    <property type="molecule type" value="Genomic_DNA"/>
</dbReference>
<dbReference type="RefSeq" id="WP_003517916.1">
    <property type="nucleotide sequence ID" value="NC_009012.1"/>
</dbReference>
<dbReference type="SMR" id="A3DCK9"/>
<dbReference type="STRING" id="203119.Cthe_0450"/>
<dbReference type="GeneID" id="35805084"/>
<dbReference type="KEGG" id="cth:Cthe_0450"/>
<dbReference type="eggNOG" id="COG1327">
    <property type="taxonomic scope" value="Bacteria"/>
</dbReference>
<dbReference type="HOGENOM" id="CLU_108412_0_0_9"/>
<dbReference type="OrthoDB" id="9807461at2"/>
<dbReference type="Proteomes" id="UP000002145">
    <property type="component" value="Chromosome"/>
</dbReference>
<dbReference type="GO" id="GO:0005524">
    <property type="term" value="F:ATP binding"/>
    <property type="evidence" value="ECO:0007669"/>
    <property type="project" value="UniProtKB-KW"/>
</dbReference>
<dbReference type="GO" id="GO:0003677">
    <property type="term" value="F:DNA binding"/>
    <property type="evidence" value="ECO:0007669"/>
    <property type="project" value="UniProtKB-KW"/>
</dbReference>
<dbReference type="GO" id="GO:0008270">
    <property type="term" value="F:zinc ion binding"/>
    <property type="evidence" value="ECO:0007669"/>
    <property type="project" value="UniProtKB-UniRule"/>
</dbReference>
<dbReference type="GO" id="GO:0045892">
    <property type="term" value="P:negative regulation of DNA-templated transcription"/>
    <property type="evidence" value="ECO:0007669"/>
    <property type="project" value="UniProtKB-UniRule"/>
</dbReference>
<dbReference type="HAMAP" id="MF_00440">
    <property type="entry name" value="NrdR"/>
    <property type="match status" value="1"/>
</dbReference>
<dbReference type="InterPro" id="IPR005144">
    <property type="entry name" value="ATP-cone_dom"/>
</dbReference>
<dbReference type="InterPro" id="IPR055173">
    <property type="entry name" value="NrdR-like_N"/>
</dbReference>
<dbReference type="InterPro" id="IPR003796">
    <property type="entry name" value="RNR_NrdR-like"/>
</dbReference>
<dbReference type="NCBIfam" id="TIGR00244">
    <property type="entry name" value="transcriptional regulator NrdR"/>
    <property type="match status" value="1"/>
</dbReference>
<dbReference type="PANTHER" id="PTHR30455">
    <property type="entry name" value="TRANSCRIPTIONAL REPRESSOR NRDR"/>
    <property type="match status" value="1"/>
</dbReference>
<dbReference type="PANTHER" id="PTHR30455:SF2">
    <property type="entry name" value="TRANSCRIPTIONAL REPRESSOR NRDR"/>
    <property type="match status" value="1"/>
</dbReference>
<dbReference type="Pfam" id="PF03477">
    <property type="entry name" value="ATP-cone"/>
    <property type="match status" value="1"/>
</dbReference>
<dbReference type="Pfam" id="PF22811">
    <property type="entry name" value="Zn_ribbon_NrdR"/>
    <property type="match status" value="1"/>
</dbReference>
<dbReference type="PROSITE" id="PS51161">
    <property type="entry name" value="ATP_CONE"/>
    <property type="match status" value="1"/>
</dbReference>
<accession>A3DCK9</accession>
<comment type="function">
    <text evidence="1">Negatively regulates transcription of bacterial ribonucleotide reductase nrd genes and operons by binding to NrdR-boxes.</text>
</comment>
<comment type="cofactor">
    <cofactor evidence="1">
        <name>Zn(2+)</name>
        <dbReference type="ChEBI" id="CHEBI:29105"/>
    </cofactor>
    <text evidence="1">Binds 1 zinc ion.</text>
</comment>
<comment type="similarity">
    <text evidence="1">Belongs to the NrdR family.</text>
</comment>
<keyword id="KW-0067">ATP-binding</keyword>
<keyword id="KW-0238">DNA-binding</keyword>
<keyword id="KW-0479">Metal-binding</keyword>
<keyword id="KW-0547">Nucleotide-binding</keyword>
<keyword id="KW-1185">Reference proteome</keyword>
<keyword id="KW-0678">Repressor</keyword>
<keyword id="KW-0804">Transcription</keyword>
<keyword id="KW-0805">Transcription regulation</keyword>
<keyword id="KW-0862">Zinc</keyword>
<keyword id="KW-0863">Zinc-finger</keyword>
<protein>
    <recommendedName>
        <fullName evidence="1">Transcriptional repressor NrdR</fullName>
    </recommendedName>
</protein>
<sequence length="151" mass="17813">MKCPYCGYIEDRVIDSRPTDEGSAIRRRRECSKCLKRFTTYEKVESLPIMVIKKDKSRQAFDREKLLNGILRACEKRPVSIEQLEKLVDDIESQIHNSLQREVTSKDIGEMVMAKLKNLDEVAYVRFASVYRQFKDINTFMDELRKLLNEK</sequence>
<organism>
    <name type="scientific">Acetivibrio thermocellus (strain ATCC 27405 / DSM 1237 / JCM 9322 / NBRC 103400 / NCIMB 10682 / NRRL B-4536 / VPI 7372)</name>
    <name type="common">Clostridium thermocellum</name>
    <dbReference type="NCBI Taxonomy" id="203119"/>
    <lineage>
        <taxon>Bacteria</taxon>
        <taxon>Bacillati</taxon>
        <taxon>Bacillota</taxon>
        <taxon>Clostridia</taxon>
        <taxon>Eubacteriales</taxon>
        <taxon>Oscillospiraceae</taxon>
        <taxon>Acetivibrio</taxon>
    </lineage>
</organism>
<gene>
    <name evidence="1" type="primary">nrdR</name>
    <name type="ordered locus">Cthe_0450</name>
</gene>
<proteinExistence type="inferred from homology"/>
<name>NRDR_ACET2</name>
<evidence type="ECO:0000255" key="1">
    <source>
        <dbReference type="HAMAP-Rule" id="MF_00440"/>
    </source>
</evidence>